<reference key="1">
    <citation type="journal article" date="2005" name="Nature">
        <title>The DNA sequence of the human X chromosome.</title>
        <authorList>
            <person name="Ross M.T."/>
            <person name="Grafham D.V."/>
            <person name="Coffey A.J."/>
            <person name="Scherer S."/>
            <person name="McLay K."/>
            <person name="Muzny D."/>
            <person name="Platzer M."/>
            <person name="Howell G.R."/>
            <person name="Burrows C."/>
            <person name="Bird C.P."/>
            <person name="Frankish A."/>
            <person name="Lovell F.L."/>
            <person name="Howe K.L."/>
            <person name="Ashurst J.L."/>
            <person name="Fulton R.S."/>
            <person name="Sudbrak R."/>
            <person name="Wen G."/>
            <person name="Jones M.C."/>
            <person name="Hurles M.E."/>
            <person name="Andrews T.D."/>
            <person name="Scott C.E."/>
            <person name="Searle S."/>
            <person name="Ramser J."/>
            <person name="Whittaker A."/>
            <person name="Deadman R."/>
            <person name="Carter N.P."/>
            <person name="Hunt S.E."/>
            <person name="Chen R."/>
            <person name="Cree A."/>
            <person name="Gunaratne P."/>
            <person name="Havlak P."/>
            <person name="Hodgson A."/>
            <person name="Metzker M.L."/>
            <person name="Richards S."/>
            <person name="Scott G."/>
            <person name="Steffen D."/>
            <person name="Sodergren E."/>
            <person name="Wheeler D.A."/>
            <person name="Worley K.C."/>
            <person name="Ainscough R."/>
            <person name="Ambrose K.D."/>
            <person name="Ansari-Lari M.A."/>
            <person name="Aradhya S."/>
            <person name="Ashwell R.I."/>
            <person name="Babbage A.K."/>
            <person name="Bagguley C.L."/>
            <person name="Ballabio A."/>
            <person name="Banerjee R."/>
            <person name="Barker G.E."/>
            <person name="Barlow K.F."/>
            <person name="Barrett I.P."/>
            <person name="Bates K.N."/>
            <person name="Beare D.M."/>
            <person name="Beasley H."/>
            <person name="Beasley O."/>
            <person name="Beck A."/>
            <person name="Bethel G."/>
            <person name="Blechschmidt K."/>
            <person name="Brady N."/>
            <person name="Bray-Allen S."/>
            <person name="Bridgeman A.M."/>
            <person name="Brown A.J."/>
            <person name="Brown M.J."/>
            <person name="Bonnin D."/>
            <person name="Bruford E.A."/>
            <person name="Buhay C."/>
            <person name="Burch P."/>
            <person name="Burford D."/>
            <person name="Burgess J."/>
            <person name="Burrill W."/>
            <person name="Burton J."/>
            <person name="Bye J.M."/>
            <person name="Carder C."/>
            <person name="Carrel L."/>
            <person name="Chako J."/>
            <person name="Chapman J.C."/>
            <person name="Chavez D."/>
            <person name="Chen E."/>
            <person name="Chen G."/>
            <person name="Chen Y."/>
            <person name="Chen Z."/>
            <person name="Chinault C."/>
            <person name="Ciccodicola A."/>
            <person name="Clark S.Y."/>
            <person name="Clarke G."/>
            <person name="Clee C.M."/>
            <person name="Clegg S."/>
            <person name="Clerc-Blankenburg K."/>
            <person name="Clifford K."/>
            <person name="Cobley V."/>
            <person name="Cole C.G."/>
            <person name="Conquer J.S."/>
            <person name="Corby N."/>
            <person name="Connor R.E."/>
            <person name="David R."/>
            <person name="Davies J."/>
            <person name="Davis C."/>
            <person name="Davis J."/>
            <person name="Delgado O."/>
            <person name="Deshazo D."/>
            <person name="Dhami P."/>
            <person name="Ding Y."/>
            <person name="Dinh H."/>
            <person name="Dodsworth S."/>
            <person name="Draper H."/>
            <person name="Dugan-Rocha S."/>
            <person name="Dunham A."/>
            <person name="Dunn M."/>
            <person name="Durbin K.J."/>
            <person name="Dutta I."/>
            <person name="Eades T."/>
            <person name="Ellwood M."/>
            <person name="Emery-Cohen A."/>
            <person name="Errington H."/>
            <person name="Evans K.L."/>
            <person name="Faulkner L."/>
            <person name="Francis F."/>
            <person name="Frankland J."/>
            <person name="Fraser A.E."/>
            <person name="Galgoczy P."/>
            <person name="Gilbert J."/>
            <person name="Gill R."/>
            <person name="Gloeckner G."/>
            <person name="Gregory S.G."/>
            <person name="Gribble S."/>
            <person name="Griffiths C."/>
            <person name="Grocock R."/>
            <person name="Gu Y."/>
            <person name="Gwilliam R."/>
            <person name="Hamilton C."/>
            <person name="Hart E.A."/>
            <person name="Hawes A."/>
            <person name="Heath P.D."/>
            <person name="Heitmann K."/>
            <person name="Hennig S."/>
            <person name="Hernandez J."/>
            <person name="Hinzmann B."/>
            <person name="Ho S."/>
            <person name="Hoffs M."/>
            <person name="Howden P.J."/>
            <person name="Huckle E.J."/>
            <person name="Hume J."/>
            <person name="Hunt P.J."/>
            <person name="Hunt A.R."/>
            <person name="Isherwood J."/>
            <person name="Jacob L."/>
            <person name="Johnson D."/>
            <person name="Jones S."/>
            <person name="de Jong P.J."/>
            <person name="Joseph S.S."/>
            <person name="Keenan S."/>
            <person name="Kelly S."/>
            <person name="Kershaw J.K."/>
            <person name="Khan Z."/>
            <person name="Kioschis P."/>
            <person name="Klages S."/>
            <person name="Knights A.J."/>
            <person name="Kosiura A."/>
            <person name="Kovar-Smith C."/>
            <person name="Laird G.K."/>
            <person name="Langford C."/>
            <person name="Lawlor S."/>
            <person name="Leversha M."/>
            <person name="Lewis L."/>
            <person name="Liu W."/>
            <person name="Lloyd C."/>
            <person name="Lloyd D.M."/>
            <person name="Loulseged H."/>
            <person name="Loveland J.E."/>
            <person name="Lovell J.D."/>
            <person name="Lozado R."/>
            <person name="Lu J."/>
            <person name="Lyne R."/>
            <person name="Ma J."/>
            <person name="Maheshwari M."/>
            <person name="Matthews L.H."/>
            <person name="McDowall J."/>
            <person name="McLaren S."/>
            <person name="McMurray A."/>
            <person name="Meidl P."/>
            <person name="Meitinger T."/>
            <person name="Milne S."/>
            <person name="Miner G."/>
            <person name="Mistry S.L."/>
            <person name="Morgan M."/>
            <person name="Morris S."/>
            <person name="Mueller I."/>
            <person name="Mullikin J.C."/>
            <person name="Nguyen N."/>
            <person name="Nordsiek G."/>
            <person name="Nyakatura G."/>
            <person name="O'dell C.N."/>
            <person name="Okwuonu G."/>
            <person name="Palmer S."/>
            <person name="Pandian R."/>
            <person name="Parker D."/>
            <person name="Parrish J."/>
            <person name="Pasternak S."/>
            <person name="Patel D."/>
            <person name="Pearce A.V."/>
            <person name="Pearson D.M."/>
            <person name="Pelan S.E."/>
            <person name="Perez L."/>
            <person name="Porter K.M."/>
            <person name="Ramsey Y."/>
            <person name="Reichwald K."/>
            <person name="Rhodes S."/>
            <person name="Ridler K.A."/>
            <person name="Schlessinger D."/>
            <person name="Schueler M.G."/>
            <person name="Sehra H.K."/>
            <person name="Shaw-Smith C."/>
            <person name="Shen H."/>
            <person name="Sheridan E.M."/>
            <person name="Shownkeen R."/>
            <person name="Skuce C.D."/>
            <person name="Smith M.L."/>
            <person name="Sotheran E.C."/>
            <person name="Steingruber H.E."/>
            <person name="Steward C.A."/>
            <person name="Storey R."/>
            <person name="Swann R.M."/>
            <person name="Swarbreck D."/>
            <person name="Tabor P.E."/>
            <person name="Taudien S."/>
            <person name="Taylor T."/>
            <person name="Teague B."/>
            <person name="Thomas K."/>
            <person name="Thorpe A."/>
            <person name="Timms K."/>
            <person name="Tracey A."/>
            <person name="Trevanion S."/>
            <person name="Tromans A.C."/>
            <person name="d'Urso M."/>
            <person name="Verduzco D."/>
            <person name="Villasana D."/>
            <person name="Waldron L."/>
            <person name="Wall M."/>
            <person name="Wang Q."/>
            <person name="Warren J."/>
            <person name="Warry G.L."/>
            <person name="Wei X."/>
            <person name="West A."/>
            <person name="Whitehead S.L."/>
            <person name="Whiteley M.N."/>
            <person name="Wilkinson J.E."/>
            <person name="Willey D.L."/>
            <person name="Williams G."/>
            <person name="Williams L."/>
            <person name="Williamson A."/>
            <person name="Williamson H."/>
            <person name="Wilming L."/>
            <person name="Woodmansey R.L."/>
            <person name="Wray P.W."/>
            <person name="Yen J."/>
            <person name="Zhang J."/>
            <person name="Zhou J."/>
            <person name="Zoghbi H."/>
            <person name="Zorilla S."/>
            <person name="Buck D."/>
            <person name="Reinhardt R."/>
            <person name="Poustka A."/>
            <person name="Rosenthal A."/>
            <person name="Lehrach H."/>
            <person name="Meindl A."/>
            <person name="Minx P.J."/>
            <person name="Hillier L.W."/>
            <person name="Willard H.F."/>
            <person name="Wilson R.K."/>
            <person name="Waterston R.H."/>
            <person name="Rice C.M."/>
            <person name="Vaudin M."/>
            <person name="Coulson A."/>
            <person name="Nelson D.L."/>
            <person name="Weinstock G."/>
            <person name="Sulston J.E."/>
            <person name="Durbin R.M."/>
            <person name="Hubbard T."/>
            <person name="Gibbs R.A."/>
            <person name="Beck S."/>
            <person name="Rogers J."/>
            <person name="Bentley D.R."/>
        </authorList>
    </citation>
    <scope>NUCLEOTIDE SEQUENCE [LARGE SCALE GENOMIC DNA]</scope>
</reference>
<reference key="2">
    <citation type="journal article" date="2009" name="Genomics">
        <title>Evidence for potential functionality of nuclearly-encoded humanin isoforms.</title>
        <authorList>
            <person name="Bodzioch M."/>
            <person name="Lapicka-Bodzioch K."/>
            <person name="Zapala B."/>
            <person name="Kamysz W."/>
            <person name="Kiec-Wilk B."/>
            <person name="Dembinska-Kiec A."/>
        </authorList>
    </citation>
    <scope>TISSUE SPECIFICITY</scope>
    <scope>INDUCTION</scope>
</reference>
<gene>
    <name evidence="6" type="primary">MTRNR2L10</name>
</gene>
<sequence length="24" mass="2806">MTTRGFSCLLLLIREIDLSAKRRI</sequence>
<protein>
    <recommendedName>
        <fullName evidence="4">Humanin-like 10</fullName>
        <shortName evidence="3">HN10</shortName>
    </recommendedName>
    <alternativeName>
        <fullName evidence="6">MT-RNR2-like protein 10</fullName>
    </alternativeName>
</protein>
<accession>P0CJ77</accession>
<dbReference type="EMBL" id="AL158819">
    <property type="status" value="NOT_ANNOTATED_CDS"/>
    <property type="molecule type" value="Genomic_DNA"/>
</dbReference>
<dbReference type="RefSeq" id="NP_001177637.1">
    <property type="nucleotide sequence ID" value="NM_001190708.1"/>
</dbReference>
<dbReference type="STRING" id="9606.ENSP00000442159"/>
<dbReference type="BioMuta" id="MTRNR2L10"/>
<dbReference type="jPOST" id="P0CJ77"/>
<dbReference type="PaxDb" id="9606-ENSP00000442159"/>
<dbReference type="DNASU" id="100463488"/>
<dbReference type="UCSC" id="uc022bxr.2">
    <property type="organism name" value="human"/>
</dbReference>
<dbReference type="AGR" id="HGNC:37167"/>
<dbReference type="GeneCards" id="MTRNR2L10"/>
<dbReference type="HGNC" id="HGNC:37167">
    <property type="gene designation" value="MTRNR2L10"/>
</dbReference>
<dbReference type="neXtProt" id="NX_P0CJ77"/>
<dbReference type="VEuPathDB" id="HostDB:ENSG00000256045"/>
<dbReference type="HOGENOM" id="CLU_221584_0_0_1"/>
<dbReference type="InParanoid" id="P0CJ77"/>
<dbReference type="PAN-GO" id="P0CJ77">
    <property type="GO annotations" value="2 GO annotations based on evolutionary models"/>
</dbReference>
<dbReference type="PhylomeDB" id="P0CJ77"/>
<dbReference type="PathwayCommons" id="P0CJ77"/>
<dbReference type="SignaLink" id="P0CJ77"/>
<dbReference type="BioGRID-ORCS" id="100463488">
    <property type="hits" value="6 hits in 293 CRISPR screens"/>
</dbReference>
<dbReference type="ChiTaRS" id="MTRNR2L10">
    <property type="organism name" value="human"/>
</dbReference>
<dbReference type="Pharos" id="P0CJ77">
    <property type="development level" value="Tdark"/>
</dbReference>
<dbReference type="PRO" id="PR:P0CJ77"/>
<dbReference type="Proteomes" id="UP000005640">
    <property type="component" value="Chromosome X"/>
</dbReference>
<dbReference type="Bgee" id="ENSG00000256045">
    <property type="expression patterns" value="Expressed in male germ line stem cell (sensu Vertebrata) in testis and 88 other cell types or tissues"/>
</dbReference>
<dbReference type="GO" id="GO:0005737">
    <property type="term" value="C:cytoplasm"/>
    <property type="evidence" value="ECO:0007669"/>
    <property type="project" value="UniProtKB-SubCell"/>
</dbReference>
<dbReference type="GO" id="GO:0005576">
    <property type="term" value="C:extracellular region"/>
    <property type="evidence" value="ECO:0007669"/>
    <property type="project" value="UniProtKB-SubCell"/>
</dbReference>
<dbReference type="GO" id="GO:0048019">
    <property type="term" value="F:receptor antagonist activity"/>
    <property type="evidence" value="ECO:0000318"/>
    <property type="project" value="GO_Central"/>
</dbReference>
<dbReference type="GO" id="GO:1900118">
    <property type="term" value="P:negative regulation of execution phase of apoptosis"/>
    <property type="evidence" value="ECO:0000318"/>
    <property type="project" value="GO_Central"/>
</dbReference>
<dbReference type="CDD" id="cd20245">
    <property type="entry name" value="humanin"/>
    <property type="match status" value="1"/>
</dbReference>
<dbReference type="InterPro" id="IPR028139">
    <property type="entry name" value="Humanin"/>
</dbReference>
<dbReference type="PANTHER" id="PTHR33895:SF3">
    <property type="entry name" value="HUMANIN-LIKE 10"/>
    <property type="match status" value="1"/>
</dbReference>
<dbReference type="PANTHER" id="PTHR33895">
    <property type="entry name" value="HUMANIN-LIKE 4"/>
    <property type="match status" value="1"/>
</dbReference>
<dbReference type="Pfam" id="PF15040">
    <property type="entry name" value="Humanin"/>
    <property type="match status" value="1"/>
</dbReference>
<comment type="function">
    <text evidence="1">Plays a role as a neuroprotective and antiapoptotic factor.</text>
</comment>
<comment type="subcellular location">
    <subcellularLocation>
        <location evidence="1">Secreted</location>
    </subcellularLocation>
    <subcellularLocation>
        <location evidence="1">Cytoplasm</location>
    </subcellularLocation>
</comment>
<comment type="tissue specificity">
    <text evidence="2">Expressed in mature brain, thyroid gland and testis.</text>
</comment>
<comment type="induction">
    <text evidence="2">Down-regulated 6 hours following staurosporine (STS) treatment and up-regulated 24 hours following STS treatment. Down-regulated 6 hours following beta-carotene treatment, while it is up-regulated 24 hours following beta-carotene treatment.</text>
</comment>
<comment type="similarity">
    <text evidence="4">Belongs to the humanin family.</text>
</comment>
<comment type="caution">
    <text evidence="5">The humanin peptide has been shown to be biologically active but is the product of a mitochondrial gene, MT-RNR2. The mechanisms allowing the production and the secretion of humanin from the mitochondrial gene remaining unclear, the possibility exist that the physiologically active humanin peptide is encoded by one of the related genes present in the nuclear genome including the one described here (PubMed:19477263).</text>
</comment>
<keyword id="KW-0963">Cytoplasm</keyword>
<keyword id="KW-1185">Reference proteome</keyword>
<keyword id="KW-0964">Secreted</keyword>
<evidence type="ECO:0000250" key="1">
    <source>
        <dbReference type="UniProtKB" id="Q8IVG9"/>
    </source>
</evidence>
<evidence type="ECO:0000269" key="2">
    <source>
    </source>
</evidence>
<evidence type="ECO:0000303" key="3">
    <source>
    </source>
</evidence>
<evidence type="ECO:0000305" key="4"/>
<evidence type="ECO:0000305" key="5">
    <source>
    </source>
</evidence>
<evidence type="ECO:0000312" key="6">
    <source>
        <dbReference type="HGNC" id="HGNC:37167"/>
    </source>
</evidence>
<feature type="chain" id="PRO_0000404559" description="Humanin-like 10">
    <location>
        <begin position="1"/>
        <end position="24"/>
    </location>
</feature>
<name>HMN10_HUMAN</name>
<proteinExistence type="evidence at transcript level"/>
<organism>
    <name type="scientific">Homo sapiens</name>
    <name type="common">Human</name>
    <dbReference type="NCBI Taxonomy" id="9606"/>
    <lineage>
        <taxon>Eukaryota</taxon>
        <taxon>Metazoa</taxon>
        <taxon>Chordata</taxon>
        <taxon>Craniata</taxon>
        <taxon>Vertebrata</taxon>
        <taxon>Euteleostomi</taxon>
        <taxon>Mammalia</taxon>
        <taxon>Eutheria</taxon>
        <taxon>Euarchontoglires</taxon>
        <taxon>Primates</taxon>
        <taxon>Haplorrhini</taxon>
        <taxon>Catarrhini</taxon>
        <taxon>Hominidae</taxon>
        <taxon>Homo</taxon>
    </lineage>
</organism>